<dbReference type="EC" id="2.7.4.8" evidence="1"/>
<dbReference type="EMBL" id="AL445565">
    <property type="protein sequence ID" value="CAC13860.1"/>
    <property type="molecule type" value="Genomic_DNA"/>
</dbReference>
<dbReference type="PIR" id="G90597">
    <property type="entry name" value="G90597"/>
</dbReference>
<dbReference type="RefSeq" id="WP_010925488.1">
    <property type="nucleotide sequence ID" value="NC_002771.1"/>
</dbReference>
<dbReference type="SMR" id="Q98PN5"/>
<dbReference type="STRING" id="272635.gene:17577298"/>
<dbReference type="KEGG" id="mpu:MYPU_6870"/>
<dbReference type="eggNOG" id="COG0194">
    <property type="taxonomic scope" value="Bacteria"/>
</dbReference>
<dbReference type="HOGENOM" id="CLU_001715_1_2_14"/>
<dbReference type="BioCyc" id="MPUL272635:G1GT6-701-MONOMER"/>
<dbReference type="Proteomes" id="UP000000528">
    <property type="component" value="Chromosome"/>
</dbReference>
<dbReference type="GO" id="GO:0005829">
    <property type="term" value="C:cytosol"/>
    <property type="evidence" value="ECO:0007669"/>
    <property type="project" value="TreeGrafter"/>
</dbReference>
<dbReference type="GO" id="GO:0005524">
    <property type="term" value="F:ATP binding"/>
    <property type="evidence" value="ECO:0007669"/>
    <property type="project" value="UniProtKB-UniRule"/>
</dbReference>
<dbReference type="GO" id="GO:0004385">
    <property type="term" value="F:guanylate kinase activity"/>
    <property type="evidence" value="ECO:0007669"/>
    <property type="project" value="UniProtKB-UniRule"/>
</dbReference>
<dbReference type="CDD" id="cd00071">
    <property type="entry name" value="GMPK"/>
    <property type="match status" value="1"/>
</dbReference>
<dbReference type="FunFam" id="3.30.63.10:FF:000005">
    <property type="entry name" value="Guanylate kinase"/>
    <property type="match status" value="1"/>
</dbReference>
<dbReference type="Gene3D" id="3.40.50.300">
    <property type="entry name" value="P-loop containing nucleotide triphosphate hydrolases"/>
    <property type="match status" value="1"/>
</dbReference>
<dbReference type="HAMAP" id="MF_00328">
    <property type="entry name" value="Guanylate_kinase"/>
    <property type="match status" value="1"/>
</dbReference>
<dbReference type="InterPro" id="IPR008145">
    <property type="entry name" value="GK/Ca_channel_bsu"/>
</dbReference>
<dbReference type="InterPro" id="IPR008144">
    <property type="entry name" value="Guanylate_kin-like_dom"/>
</dbReference>
<dbReference type="InterPro" id="IPR017665">
    <property type="entry name" value="Guanylate_kinase"/>
</dbReference>
<dbReference type="InterPro" id="IPR020590">
    <property type="entry name" value="Guanylate_kinase_CS"/>
</dbReference>
<dbReference type="InterPro" id="IPR027417">
    <property type="entry name" value="P-loop_NTPase"/>
</dbReference>
<dbReference type="NCBIfam" id="TIGR03263">
    <property type="entry name" value="guanyl_kin"/>
    <property type="match status" value="1"/>
</dbReference>
<dbReference type="PANTHER" id="PTHR23117:SF13">
    <property type="entry name" value="GUANYLATE KINASE"/>
    <property type="match status" value="1"/>
</dbReference>
<dbReference type="PANTHER" id="PTHR23117">
    <property type="entry name" value="GUANYLATE KINASE-RELATED"/>
    <property type="match status" value="1"/>
</dbReference>
<dbReference type="Pfam" id="PF00625">
    <property type="entry name" value="Guanylate_kin"/>
    <property type="match status" value="1"/>
</dbReference>
<dbReference type="SMART" id="SM00072">
    <property type="entry name" value="GuKc"/>
    <property type="match status" value="1"/>
</dbReference>
<dbReference type="SUPFAM" id="SSF52540">
    <property type="entry name" value="P-loop containing nucleoside triphosphate hydrolases"/>
    <property type="match status" value="1"/>
</dbReference>
<dbReference type="PROSITE" id="PS00856">
    <property type="entry name" value="GUANYLATE_KINASE_1"/>
    <property type="match status" value="1"/>
</dbReference>
<dbReference type="PROSITE" id="PS50052">
    <property type="entry name" value="GUANYLATE_KINASE_2"/>
    <property type="match status" value="1"/>
</dbReference>
<organism>
    <name type="scientific">Mycoplasmopsis pulmonis (strain UAB CTIP)</name>
    <name type="common">Mycoplasma pulmonis</name>
    <dbReference type="NCBI Taxonomy" id="272635"/>
    <lineage>
        <taxon>Bacteria</taxon>
        <taxon>Bacillati</taxon>
        <taxon>Mycoplasmatota</taxon>
        <taxon>Mycoplasmoidales</taxon>
        <taxon>Metamycoplasmataceae</taxon>
        <taxon>Mycoplasmopsis</taxon>
    </lineage>
</organism>
<gene>
    <name evidence="1" type="primary">gmk</name>
    <name type="ordered locus">MYPU_6870</name>
</gene>
<feature type="chain" id="PRO_0000170569" description="Guanylate kinase">
    <location>
        <begin position="1"/>
        <end position="196"/>
    </location>
</feature>
<feature type="domain" description="Guanylate kinase-like" evidence="1">
    <location>
        <begin position="7"/>
        <end position="191"/>
    </location>
</feature>
<feature type="binding site" evidence="1">
    <location>
        <begin position="14"/>
        <end position="21"/>
    </location>
    <ligand>
        <name>ATP</name>
        <dbReference type="ChEBI" id="CHEBI:30616"/>
    </ligand>
</feature>
<name>KGUA_MYCPU</name>
<proteinExistence type="inferred from homology"/>
<reference key="1">
    <citation type="journal article" date="2001" name="Nucleic Acids Res.">
        <title>The complete genome sequence of the murine respiratory pathogen Mycoplasma pulmonis.</title>
        <authorList>
            <person name="Chambaud I."/>
            <person name="Heilig R."/>
            <person name="Ferris S."/>
            <person name="Barbe V."/>
            <person name="Samson D."/>
            <person name="Galisson F."/>
            <person name="Moszer I."/>
            <person name="Dybvig K."/>
            <person name="Wroblewski H."/>
            <person name="Viari A."/>
            <person name="Rocha E.P.C."/>
            <person name="Blanchard A."/>
        </authorList>
    </citation>
    <scope>NUCLEOTIDE SEQUENCE [LARGE SCALE GENOMIC DNA]</scope>
    <source>
        <strain>UAB CTIP</strain>
    </source>
</reference>
<comment type="function">
    <text evidence="1">Essential for recycling GMP and indirectly, cGMP.</text>
</comment>
<comment type="catalytic activity">
    <reaction evidence="1">
        <text>GMP + ATP = GDP + ADP</text>
        <dbReference type="Rhea" id="RHEA:20780"/>
        <dbReference type="ChEBI" id="CHEBI:30616"/>
        <dbReference type="ChEBI" id="CHEBI:58115"/>
        <dbReference type="ChEBI" id="CHEBI:58189"/>
        <dbReference type="ChEBI" id="CHEBI:456216"/>
        <dbReference type="EC" id="2.7.4.8"/>
    </reaction>
</comment>
<comment type="subcellular location">
    <subcellularLocation>
        <location evidence="1">Cytoplasm</location>
    </subcellularLocation>
</comment>
<comment type="similarity">
    <text evidence="1">Belongs to the guanylate kinase family.</text>
</comment>
<protein>
    <recommendedName>
        <fullName evidence="1">Guanylate kinase</fullName>
        <ecNumber evidence="1">2.7.4.8</ecNumber>
    </recommendedName>
    <alternativeName>
        <fullName evidence="1">GMP kinase</fullName>
    </alternativeName>
</protein>
<sequence>MINIHKRNIVLLVGPSGVGKGTIEKILFESKTLKLSLSRSATTRKKREGEINGIHYFFISKEEFESKIENDEFMEWNEHFDNYYGTLLSEILLIFSQGRIPVLEVETYGAKKILQKYKDKKDFNWITIFVDPPSFEELENRIIKRGTDTKEKIAIRMAKAKEELKDRDLFEFKITNHTPEQAAEEIEKIILKKTMG</sequence>
<keyword id="KW-0067">ATP-binding</keyword>
<keyword id="KW-0963">Cytoplasm</keyword>
<keyword id="KW-0418">Kinase</keyword>
<keyword id="KW-0547">Nucleotide-binding</keyword>
<keyword id="KW-1185">Reference proteome</keyword>
<keyword id="KW-0808">Transferase</keyword>
<evidence type="ECO:0000255" key="1">
    <source>
        <dbReference type="HAMAP-Rule" id="MF_00328"/>
    </source>
</evidence>
<accession>Q98PN5</accession>